<feature type="signal peptide" evidence="2">
    <location>
        <begin position="1"/>
        <end position="29"/>
    </location>
</feature>
<feature type="chain" id="PRO_0000367360" description="GDSL esterase/lipase 22">
    <location>
        <begin position="30"/>
        <end position="391"/>
    </location>
</feature>
<feature type="region of interest" description="Disordered" evidence="3">
    <location>
        <begin position="372"/>
        <end position="391"/>
    </location>
</feature>
<feature type="active site" description="Nucleophile" evidence="1">
    <location>
        <position position="43"/>
    </location>
</feature>
<feature type="active site" evidence="1">
    <location>
        <position position="322"/>
    </location>
</feature>
<feature type="active site" evidence="1">
    <location>
        <position position="325"/>
    </location>
</feature>
<feature type="glycosylation site" description="N-linked (GlcNAc...) asparagine" evidence="2">
    <location>
        <position position="105"/>
    </location>
</feature>
<feature type="glycosylation site" description="N-linked (GlcNAc...) asparagine" evidence="2">
    <location>
        <position position="165"/>
    </location>
</feature>
<feature type="glycosylation site" description="N-linked (GlcNAc...) asparagine" evidence="2">
    <location>
        <position position="288"/>
    </location>
</feature>
<feature type="sequence conflict" description="In Ref. 4; AAM64922." evidence="5" ref="4">
    <original>I</original>
    <variation>F</variation>
    <location>
        <position position="15"/>
    </location>
</feature>
<feature type="sequence conflict" description="In Ref. 4; AAM64922." evidence="5" ref="4">
    <original>N</original>
    <variation>S</variation>
    <location>
        <position position="191"/>
    </location>
</feature>
<comment type="subunit">
    <text evidence="4">Component of the PYK10 complex, at least composed of PYK10/BGLU23, BGLU21, BGLU22, JAL22, JAL23, PBP1/JAL30, PBP2/JAL31, JAL32, JAL33, JAL34, JAL35, GLL22 and GLL23.</text>
</comment>
<comment type="subcellular location">
    <subcellularLocation>
        <location evidence="5">Secreted</location>
    </subcellularLocation>
</comment>
<comment type="similarity">
    <text evidence="5">Belongs to the 'GDSL' lipolytic enzyme family.</text>
</comment>
<comment type="sequence caution" evidence="5">
    <conflict type="erroneous gene model prediction">
        <sequence resource="EMBL-CDS" id="AAD25772"/>
    </conflict>
</comment>
<comment type="sequence caution" evidence="5">
    <conflict type="erroneous initiation">
        <sequence resource="EMBL-CDS" id="AAM64922"/>
    </conflict>
    <text>Truncated N-terminus.</text>
</comment>
<reference key="1">
    <citation type="journal article" date="2000" name="Nature">
        <title>Sequence and analysis of chromosome 1 of the plant Arabidopsis thaliana.</title>
        <authorList>
            <person name="Theologis A."/>
            <person name="Ecker J.R."/>
            <person name="Palm C.J."/>
            <person name="Federspiel N.A."/>
            <person name="Kaul S."/>
            <person name="White O."/>
            <person name="Alonso J."/>
            <person name="Altafi H."/>
            <person name="Araujo R."/>
            <person name="Bowman C.L."/>
            <person name="Brooks S.Y."/>
            <person name="Buehler E."/>
            <person name="Chan A."/>
            <person name="Chao Q."/>
            <person name="Chen H."/>
            <person name="Cheuk R.F."/>
            <person name="Chin C.W."/>
            <person name="Chung M.K."/>
            <person name="Conn L."/>
            <person name="Conway A.B."/>
            <person name="Conway A.R."/>
            <person name="Creasy T.H."/>
            <person name="Dewar K."/>
            <person name="Dunn P."/>
            <person name="Etgu P."/>
            <person name="Feldblyum T.V."/>
            <person name="Feng J.-D."/>
            <person name="Fong B."/>
            <person name="Fujii C.Y."/>
            <person name="Gill J.E."/>
            <person name="Goldsmith A.D."/>
            <person name="Haas B."/>
            <person name="Hansen N.F."/>
            <person name="Hughes B."/>
            <person name="Huizar L."/>
            <person name="Hunter J.L."/>
            <person name="Jenkins J."/>
            <person name="Johnson-Hopson C."/>
            <person name="Khan S."/>
            <person name="Khaykin E."/>
            <person name="Kim C.J."/>
            <person name="Koo H.L."/>
            <person name="Kremenetskaia I."/>
            <person name="Kurtz D.B."/>
            <person name="Kwan A."/>
            <person name="Lam B."/>
            <person name="Langin-Hooper S."/>
            <person name="Lee A."/>
            <person name="Lee J.M."/>
            <person name="Lenz C.A."/>
            <person name="Li J.H."/>
            <person name="Li Y.-P."/>
            <person name="Lin X."/>
            <person name="Liu S.X."/>
            <person name="Liu Z.A."/>
            <person name="Luros J.S."/>
            <person name="Maiti R."/>
            <person name="Marziali A."/>
            <person name="Militscher J."/>
            <person name="Miranda M."/>
            <person name="Nguyen M."/>
            <person name="Nierman W.C."/>
            <person name="Osborne B.I."/>
            <person name="Pai G."/>
            <person name="Peterson J."/>
            <person name="Pham P.K."/>
            <person name="Rizzo M."/>
            <person name="Rooney T."/>
            <person name="Rowley D."/>
            <person name="Sakano H."/>
            <person name="Salzberg S.L."/>
            <person name="Schwartz J.R."/>
            <person name="Shinn P."/>
            <person name="Southwick A.M."/>
            <person name="Sun H."/>
            <person name="Tallon L.J."/>
            <person name="Tambunga G."/>
            <person name="Toriumi M.J."/>
            <person name="Town C.D."/>
            <person name="Utterback T."/>
            <person name="Van Aken S."/>
            <person name="Vaysberg M."/>
            <person name="Vysotskaia V.S."/>
            <person name="Walker M."/>
            <person name="Wu D."/>
            <person name="Yu G."/>
            <person name="Fraser C.M."/>
            <person name="Venter J.C."/>
            <person name="Davis R.W."/>
        </authorList>
    </citation>
    <scope>NUCLEOTIDE SEQUENCE [LARGE SCALE GENOMIC DNA]</scope>
    <source>
        <strain>cv. Columbia</strain>
    </source>
</reference>
<reference key="2">
    <citation type="journal article" date="2017" name="Plant J.">
        <title>Araport11: a complete reannotation of the Arabidopsis thaliana reference genome.</title>
        <authorList>
            <person name="Cheng C.Y."/>
            <person name="Krishnakumar V."/>
            <person name="Chan A.P."/>
            <person name="Thibaud-Nissen F."/>
            <person name="Schobel S."/>
            <person name="Town C.D."/>
        </authorList>
    </citation>
    <scope>GENOME REANNOTATION</scope>
    <source>
        <strain>cv. Columbia</strain>
    </source>
</reference>
<reference key="3">
    <citation type="submission" date="2006-05" db="EMBL/GenBank/DDBJ databases">
        <title>Arabidopsis ORF clones.</title>
        <authorList>
            <person name="Shinn P."/>
            <person name="Chen H."/>
            <person name="Kim C.J."/>
            <person name="Quinitio C."/>
            <person name="Ecker J.R."/>
        </authorList>
    </citation>
    <scope>NUCLEOTIDE SEQUENCE [LARGE SCALE MRNA]</scope>
    <source>
        <strain>cv. Columbia</strain>
    </source>
</reference>
<reference key="4">
    <citation type="submission" date="2002-03" db="EMBL/GenBank/DDBJ databases">
        <title>Full-length cDNA from Arabidopsis thaliana.</title>
        <authorList>
            <person name="Brover V.V."/>
            <person name="Troukhan M.E."/>
            <person name="Alexandrov N.A."/>
            <person name="Lu Y.-P."/>
            <person name="Flavell R.B."/>
            <person name="Feldmann K.A."/>
        </authorList>
    </citation>
    <scope>NUCLEOTIDE SEQUENCE [LARGE SCALE MRNA]</scope>
</reference>
<reference key="5">
    <citation type="journal article" date="2004" name="Prog. Lipid Res.">
        <title>GDSL family of serine esterases/lipases.</title>
        <authorList>
            <person name="Akoh C.C."/>
            <person name="Lee G.-C."/>
            <person name="Liaw Y.-C."/>
            <person name="Huang T.-H."/>
            <person name="Shaw J.-F."/>
        </authorList>
    </citation>
    <scope>REVIEW</scope>
</reference>
<reference key="6">
    <citation type="journal article" date="2008" name="Pak. J. Biol. Sci.">
        <title>Sequence analysis of GDSL lipase gene family in Arabidopsis thaliana.</title>
        <authorList>
            <person name="Ling H."/>
        </authorList>
    </citation>
    <scope>GENE FAMILY</scope>
</reference>
<reference key="7">
    <citation type="journal article" date="2008" name="Plant Cell Physiol.">
        <title>Antagonistic jacalin-related lectins regulate the size of ER body-type beta-glucosidase complexes in Arabidopsis thaliana.</title>
        <authorList>
            <person name="Nagano A.J."/>
            <person name="Fukao Y."/>
            <person name="Fujiwara M."/>
            <person name="Nishimura M."/>
            <person name="Hara-Nishimura I."/>
        </authorList>
    </citation>
    <scope>IDENTIFICATION IN THE PYK10 COMPLEX</scope>
</reference>
<protein>
    <recommendedName>
        <fullName>GDSL esterase/lipase 22</fullName>
        <ecNumber>3.1.1.-</ecNumber>
    </recommendedName>
    <alternativeName>
        <fullName>Extracellular lipase At1g54000</fullName>
    </alternativeName>
    <alternativeName>
        <fullName>GDSL esterase/lipase At1g54000</fullName>
    </alternativeName>
</protein>
<evidence type="ECO:0000250" key="1"/>
<evidence type="ECO:0000255" key="2"/>
<evidence type="ECO:0000256" key="3">
    <source>
        <dbReference type="SAM" id="MobiDB-lite"/>
    </source>
</evidence>
<evidence type="ECO:0000269" key="4">
    <source>
    </source>
</evidence>
<evidence type="ECO:0000305" key="5"/>
<organism>
    <name type="scientific">Arabidopsis thaliana</name>
    <name type="common">Mouse-ear cress</name>
    <dbReference type="NCBI Taxonomy" id="3702"/>
    <lineage>
        <taxon>Eukaryota</taxon>
        <taxon>Viridiplantae</taxon>
        <taxon>Streptophyta</taxon>
        <taxon>Embryophyta</taxon>
        <taxon>Tracheophyta</taxon>
        <taxon>Spermatophyta</taxon>
        <taxon>Magnoliopsida</taxon>
        <taxon>eudicotyledons</taxon>
        <taxon>Gunneridae</taxon>
        <taxon>Pentapetalae</taxon>
        <taxon>rosids</taxon>
        <taxon>malvids</taxon>
        <taxon>Brassicales</taxon>
        <taxon>Brassicaceae</taxon>
        <taxon>Camelineae</taxon>
        <taxon>Arabidopsis</taxon>
    </lineage>
</organism>
<gene>
    <name type="primary">GLL22</name>
    <name type="ordered locus">At1g54000</name>
    <name type="ORF">F15I1.8</name>
</gene>
<name>GDL18_ARATH</name>
<accession>Q1H583</accession>
<accession>Q8LB78</accession>
<accession>Q9SYF6</accession>
<proteinExistence type="evidence at protein level"/>
<keyword id="KW-0325">Glycoprotein</keyword>
<keyword id="KW-0378">Hydrolase</keyword>
<keyword id="KW-0442">Lipid degradation</keyword>
<keyword id="KW-0443">Lipid metabolism</keyword>
<keyword id="KW-1185">Reference proteome</keyword>
<keyword id="KW-0964">Secreted</keyword>
<keyword id="KW-0732">Signal</keyword>
<dbReference type="EC" id="3.1.1.-"/>
<dbReference type="EMBL" id="AC006577">
    <property type="protein sequence ID" value="AAD25772.1"/>
    <property type="status" value="ALT_SEQ"/>
    <property type="molecule type" value="Genomic_DNA"/>
</dbReference>
<dbReference type="EMBL" id="CP002684">
    <property type="protein sequence ID" value="AEE33033.1"/>
    <property type="molecule type" value="Genomic_DNA"/>
</dbReference>
<dbReference type="EMBL" id="BT025581">
    <property type="protein sequence ID" value="ABF58999.1"/>
    <property type="molecule type" value="mRNA"/>
</dbReference>
<dbReference type="EMBL" id="AY087372">
    <property type="protein sequence ID" value="AAM64922.1"/>
    <property type="status" value="ALT_INIT"/>
    <property type="molecule type" value="mRNA"/>
</dbReference>
<dbReference type="PIR" id="E96580">
    <property type="entry name" value="E96580"/>
</dbReference>
<dbReference type="RefSeq" id="NP_175802.1">
    <property type="nucleotide sequence ID" value="NM_104277.4"/>
</dbReference>
<dbReference type="SMR" id="Q1H583"/>
<dbReference type="BioGRID" id="27063">
    <property type="interactions" value="3"/>
</dbReference>
<dbReference type="FunCoup" id="Q1H583">
    <property type="interactions" value="81"/>
</dbReference>
<dbReference type="IntAct" id="Q1H583">
    <property type="interactions" value="1"/>
</dbReference>
<dbReference type="STRING" id="3702.Q1H583"/>
<dbReference type="GlyCosmos" id="Q1H583">
    <property type="glycosylation" value="3 sites, No reported glycans"/>
</dbReference>
<dbReference type="GlyGen" id="Q1H583">
    <property type="glycosylation" value="4 sites"/>
</dbReference>
<dbReference type="MetOSite" id="Q1H583"/>
<dbReference type="SwissPalm" id="Q1H583"/>
<dbReference type="PaxDb" id="3702-AT1G54000.1"/>
<dbReference type="ProteomicsDB" id="247085"/>
<dbReference type="EnsemblPlants" id="AT1G54000.1">
    <property type="protein sequence ID" value="AT1G54000.1"/>
    <property type="gene ID" value="AT1G54000"/>
</dbReference>
<dbReference type="GeneID" id="841838"/>
<dbReference type="Gramene" id="AT1G54000.1">
    <property type="protein sequence ID" value="AT1G54000.1"/>
    <property type="gene ID" value="AT1G54000"/>
</dbReference>
<dbReference type="KEGG" id="ath:AT1G54000"/>
<dbReference type="Araport" id="AT1G54000"/>
<dbReference type="TAIR" id="AT1G54000">
    <property type="gene designation" value="GLL22"/>
</dbReference>
<dbReference type="eggNOG" id="ENOG502S4IX">
    <property type="taxonomic scope" value="Eukaryota"/>
</dbReference>
<dbReference type="HOGENOM" id="CLU_015101_7_0_1"/>
<dbReference type="InParanoid" id="Q1H583"/>
<dbReference type="OMA" id="SHDAYGC"/>
<dbReference type="PhylomeDB" id="Q1H583"/>
<dbReference type="BioCyc" id="ARA:AT1G54000-MONOMER"/>
<dbReference type="PRO" id="PR:Q1H583"/>
<dbReference type="Proteomes" id="UP000006548">
    <property type="component" value="Chromosome 1"/>
</dbReference>
<dbReference type="ExpressionAtlas" id="Q1H583">
    <property type="expression patterns" value="baseline and differential"/>
</dbReference>
<dbReference type="GO" id="GO:0005576">
    <property type="term" value="C:extracellular region"/>
    <property type="evidence" value="ECO:0007669"/>
    <property type="project" value="UniProtKB-SubCell"/>
</dbReference>
<dbReference type="GO" id="GO:0000325">
    <property type="term" value="C:plant-type vacuole"/>
    <property type="evidence" value="ECO:0007005"/>
    <property type="project" value="TAIR"/>
</dbReference>
<dbReference type="GO" id="GO:0009506">
    <property type="term" value="C:plasmodesma"/>
    <property type="evidence" value="ECO:0007005"/>
    <property type="project" value="TAIR"/>
</dbReference>
<dbReference type="GO" id="GO:0005774">
    <property type="term" value="C:vacuolar membrane"/>
    <property type="evidence" value="ECO:0007005"/>
    <property type="project" value="TAIR"/>
</dbReference>
<dbReference type="GO" id="GO:0016788">
    <property type="term" value="F:hydrolase activity, acting on ester bonds"/>
    <property type="evidence" value="ECO:0007669"/>
    <property type="project" value="InterPro"/>
</dbReference>
<dbReference type="GO" id="GO:0016042">
    <property type="term" value="P:lipid catabolic process"/>
    <property type="evidence" value="ECO:0007669"/>
    <property type="project" value="UniProtKB-KW"/>
</dbReference>
<dbReference type="CDD" id="cd01837">
    <property type="entry name" value="SGNH_plant_lipase_like"/>
    <property type="match status" value="1"/>
</dbReference>
<dbReference type="FunFam" id="3.40.50.1110:FF:000026">
    <property type="entry name" value="GDSL esterase/lipase At3g14220"/>
    <property type="match status" value="1"/>
</dbReference>
<dbReference type="Gene3D" id="3.40.50.1110">
    <property type="entry name" value="SGNH hydrolase"/>
    <property type="match status" value="1"/>
</dbReference>
<dbReference type="InterPro" id="IPR001087">
    <property type="entry name" value="GDSL"/>
</dbReference>
<dbReference type="InterPro" id="IPR044552">
    <property type="entry name" value="GLIP1-5/GLL25"/>
</dbReference>
<dbReference type="InterPro" id="IPR036514">
    <property type="entry name" value="SGNH_hydro_sf"/>
</dbReference>
<dbReference type="InterPro" id="IPR035669">
    <property type="entry name" value="SGNH_plant_lipase-like"/>
</dbReference>
<dbReference type="PANTHER" id="PTHR45966">
    <property type="entry name" value="GDSL-LIKE LIPASE/ACYLHYDROLASE"/>
    <property type="match status" value="1"/>
</dbReference>
<dbReference type="PANTHER" id="PTHR45966:SF36">
    <property type="entry name" value="INACTIVE GDSL ESTERASE_LIPASE-LIKE PROTEIN 25"/>
    <property type="match status" value="1"/>
</dbReference>
<dbReference type="Pfam" id="PF00657">
    <property type="entry name" value="Lipase_GDSL"/>
    <property type="match status" value="1"/>
</dbReference>
<dbReference type="SUPFAM" id="SSF52266">
    <property type="entry name" value="SGNH hydrolase"/>
    <property type="match status" value="1"/>
</dbReference>
<sequence length="391" mass="43194">MMANNCNLVSVLCVILVLTLFHNPITVAGQNSPVVALFTFGDSNFDAGNKQTLTKTLVAQGFWPYGKSRDDPNGKFSDGLITPDFLAKFMKIPLAIAPALQPNVNVSRGASFAVEGATLLGAPVESMTLNQQVKKFNQMKAANWNDDFVAKSVFMIYIGANDYLNFTKNNPTADASAQQAFVTSVTNKLKNDISALYSSGASKFVIQTLAPLGCLPIVRQEYNTGMDQCYEKLNDLAKQHNEKIGPMLNEMARNSPASAPFQFTVFDFYNAVLTRTQRNQNFRFFVTNASCCGVGSHDAYGCGLPNVHSKLCEYQRSFLFFDGRHNSEKAQEMFAHLLFGADTNVVQPMNVRELTVYPVDEPMREFWVPPTPATVHASDSSSSTSRGYEYY</sequence>